<name>TRPD_BUCAI</name>
<gene>
    <name evidence="1" type="primary">trpD</name>
    <name type="ordered locus">BU280</name>
</gene>
<organism>
    <name type="scientific">Buchnera aphidicola subsp. Acyrthosiphon pisum (strain APS)</name>
    <name type="common">Acyrthosiphon pisum symbiotic bacterium</name>
    <dbReference type="NCBI Taxonomy" id="107806"/>
    <lineage>
        <taxon>Bacteria</taxon>
        <taxon>Pseudomonadati</taxon>
        <taxon>Pseudomonadota</taxon>
        <taxon>Gammaproteobacteria</taxon>
        <taxon>Enterobacterales</taxon>
        <taxon>Erwiniaceae</taxon>
        <taxon>Buchnera</taxon>
    </lineage>
</organism>
<feature type="chain" id="PRO_0000154434" description="Anthranilate phosphoribosyltransferase">
    <location>
        <begin position="1"/>
        <end position="342"/>
    </location>
</feature>
<feature type="binding site" evidence="1">
    <location>
        <position position="79"/>
    </location>
    <ligand>
        <name>5-phospho-alpha-D-ribose 1-diphosphate</name>
        <dbReference type="ChEBI" id="CHEBI:58017"/>
    </ligand>
</feature>
<feature type="binding site" evidence="1">
    <location>
        <position position="79"/>
    </location>
    <ligand>
        <name>anthranilate</name>
        <dbReference type="ChEBI" id="CHEBI:16567"/>
        <label>1</label>
    </ligand>
</feature>
<feature type="binding site" evidence="1">
    <location>
        <begin position="82"/>
        <end position="83"/>
    </location>
    <ligand>
        <name>5-phospho-alpha-D-ribose 1-diphosphate</name>
        <dbReference type="ChEBI" id="CHEBI:58017"/>
    </ligand>
</feature>
<feature type="binding site" evidence="1">
    <location>
        <position position="87"/>
    </location>
    <ligand>
        <name>5-phospho-alpha-D-ribose 1-diphosphate</name>
        <dbReference type="ChEBI" id="CHEBI:58017"/>
    </ligand>
</feature>
<feature type="binding site" evidence="1">
    <location>
        <begin position="89"/>
        <end position="92"/>
    </location>
    <ligand>
        <name>5-phospho-alpha-D-ribose 1-diphosphate</name>
        <dbReference type="ChEBI" id="CHEBI:58017"/>
    </ligand>
</feature>
<feature type="binding site" evidence="1">
    <location>
        <position position="91"/>
    </location>
    <ligand>
        <name>Mg(2+)</name>
        <dbReference type="ChEBI" id="CHEBI:18420"/>
        <label>1</label>
    </ligand>
</feature>
<feature type="binding site" evidence="1">
    <location>
        <begin position="107"/>
        <end position="115"/>
    </location>
    <ligand>
        <name>5-phospho-alpha-D-ribose 1-diphosphate</name>
        <dbReference type="ChEBI" id="CHEBI:58017"/>
    </ligand>
</feature>
<feature type="binding site" evidence="1">
    <location>
        <position position="110"/>
    </location>
    <ligand>
        <name>anthranilate</name>
        <dbReference type="ChEBI" id="CHEBI:16567"/>
        <label>1</label>
    </ligand>
</feature>
<feature type="binding site" evidence="1">
    <location>
        <position position="119"/>
    </location>
    <ligand>
        <name>5-phospho-alpha-D-ribose 1-diphosphate</name>
        <dbReference type="ChEBI" id="CHEBI:58017"/>
    </ligand>
</feature>
<feature type="binding site" evidence="1">
    <location>
        <position position="165"/>
    </location>
    <ligand>
        <name>anthranilate</name>
        <dbReference type="ChEBI" id="CHEBI:16567"/>
        <label>2</label>
    </ligand>
</feature>
<feature type="binding site" evidence="1">
    <location>
        <position position="223"/>
    </location>
    <ligand>
        <name>Mg(2+)</name>
        <dbReference type="ChEBI" id="CHEBI:18420"/>
        <label>2</label>
    </ligand>
</feature>
<feature type="binding site" evidence="1">
    <location>
        <position position="224"/>
    </location>
    <ligand>
        <name>Mg(2+)</name>
        <dbReference type="ChEBI" id="CHEBI:18420"/>
        <label>1</label>
    </ligand>
</feature>
<feature type="binding site" evidence="1">
    <location>
        <position position="224"/>
    </location>
    <ligand>
        <name>Mg(2+)</name>
        <dbReference type="ChEBI" id="CHEBI:18420"/>
        <label>2</label>
    </ligand>
</feature>
<protein>
    <recommendedName>
        <fullName evidence="1">Anthranilate phosphoribosyltransferase</fullName>
        <ecNumber evidence="1">2.4.2.18</ecNumber>
    </recommendedName>
</protein>
<sequence length="342" mass="38756">MRNILLKIYDSKFLNQEESYQLFTLISSGKITDIKLASILTAMKIRGESIEEITGAIKAFLDKMKYFPKPDYIFSDIVGTGGDAKNTINISTMSAFVAATCGLKIIKHCNQRISSKSGSSDILEKFNINLNASPEKSRKTLDQLNICFLFAPKYHDGFKYSNNVRTDLKTKTIFNFLGPFLNPATPPLSVIGVYNKNLINIAVNILKNLQYKRAIVLHSDNTDEVTLYGTTYVSELLNKKIISYQLQPESFGLKMHPKKILKINSLEENYHIIKEIMKGKGSKLYEELIAVNVAMLLKVFGYENLKENTKLALNKIRSGDVYKHIRNVANMLKEDNHARHNT</sequence>
<proteinExistence type="inferred from homology"/>
<comment type="function">
    <text evidence="1">Catalyzes the transfer of the phosphoribosyl group of 5-phosphorylribose-1-pyrophosphate (PRPP) to anthranilate to yield N-(5'-phosphoribosyl)-anthranilate (PRA).</text>
</comment>
<comment type="catalytic activity">
    <reaction evidence="1">
        <text>N-(5-phospho-beta-D-ribosyl)anthranilate + diphosphate = 5-phospho-alpha-D-ribose 1-diphosphate + anthranilate</text>
        <dbReference type="Rhea" id="RHEA:11768"/>
        <dbReference type="ChEBI" id="CHEBI:16567"/>
        <dbReference type="ChEBI" id="CHEBI:18277"/>
        <dbReference type="ChEBI" id="CHEBI:33019"/>
        <dbReference type="ChEBI" id="CHEBI:58017"/>
        <dbReference type="EC" id="2.4.2.18"/>
    </reaction>
</comment>
<comment type="cofactor">
    <cofactor evidence="1">
        <name>Mg(2+)</name>
        <dbReference type="ChEBI" id="CHEBI:18420"/>
    </cofactor>
    <text evidence="1">Binds 2 magnesium ions per monomer.</text>
</comment>
<comment type="pathway">
    <text evidence="1">Amino-acid biosynthesis; L-tryptophan biosynthesis; L-tryptophan from chorismate: step 2/5.</text>
</comment>
<comment type="subunit">
    <text evidence="1">Homodimer.</text>
</comment>
<comment type="similarity">
    <text evidence="1">Belongs to the anthranilate phosphoribosyltransferase family.</text>
</comment>
<accession>P57367</accession>
<dbReference type="EC" id="2.4.2.18" evidence="1"/>
<dbReference type="EMBL" id="BA000003">
    <property type="protein sequence ID" value="BAB12990.1"/>
    <property type="molecule type" value="Genomic_DNA"/>
</dbReference>
<dbReference type="RefSeq" id="NP_240104.1">
    <property type="nucleotide sequence ID" value="NC_002528.1"/>
</dbReference>
<dbReference type="RefSeq" id="WP_009874234.1">
    <property type="nucleotide sequence ID" value="NC_002528.1"/>
</dbReference>
<dbReference type="SMR" id="P57367"/>
<dbReference type="STRING" id="563178.BUAP5A_275"/>
<dbReference type="EnsemblBacteria" id="BAB12990">
    <property type="protein sequence ID" value="BAB12990"/>
    <property type="gene ID" value="BAB12990"/>
</dbReference>
<dbReference type="KEGG" id="buc:BU280"/>
<dbReference type="PATRIC" id="fig|107806.10.peg.290"/>
<dbReference type="eggNOG" id="COG0547">
    <property type="taxonomic scope" value="Bacteria"/>
</dbReference>
<dbReference type="HOGENOM" id="CLU_034315_3_0_6"/>
<dbReference type="UniPathway" id="UPA00035">
    <property type="reaction ID" value="UER00041"/>
</dbReference>
<dbReference type="Proteomes" id="UP000001806">
    <property type="component" value="Chromosome"/>
</dbReference>
<dbReference type="GO" id="GO:0005829">
    <property type="term" value="C:cytosol"/>
    <property type="evidence" value="ECO:0007669"/>
    <property type="project" value="TreeGrafter"/>
</dbReference>
<dbReference type="GO" id="GO:0004048">
    <property type="term" value="F:anthranilate phosphoribosyltransferase activity"/>
    <property type="evidence" value="ECO:0007669"/>
    <property type="project" value="UniProtKB-UniRule"/>
</dbReference>
<dbReference type="GO" id="GO:0000287">
    <property type="term" value="F:magnesium ion binding"/>
    <property type="evidence" value="ECO:0007669"/>
    <property type="project" value="UniProtKB-UniRule"/>
</dbReference>
<dbReference type="GO" id="GO:0000162">
    <property type="term" value="P:L-tryptophan biosynthetic process"/>
    <property type="evidence" value="ECO:0007669"/>
    <property type="project" value="UniProtKB-UniRule"/>
</dbReference>
<dbReference type="FunFam" id="3.40.1030.10:FF:000002">
    <property type="entry name" value="Anthranilate phosphoribosyltransferase"/>
    <property type="match status" value="1"/>
</dbReference>
<dbReference type="Gene3D" id="3.40.1030.10">
    <property type="entry name" value="Nucleoside phosphorylase/phosphoribosyltransferase catalytic domain"/>
    <property type="match status" value="1"/>
</dbReference>
<dbReference type="Gene3D" id="1.20.970.10">
    <property type="entry name" value="Transferase, Pyrimidine Nucleoside Phosphorylase, Chain C"/>
    <property type="match status" value="1"/>
</dbReference>
<dbReference type="HAMAP" id="MF_00211">
    <property type="entry name" value="TrpD"/>
    <property type="match status" value="1"/>
</dbReference>
<dbReference type="InterPro" id="IPR005940">
    <property type="entry name" value="Anthranilate_Pribosyl_Tfrase"/>
</dbReference>
<dbReference type="InterPro" id="IPR000312">
    <property type="entry name" value="Glycosyl_Trfase_fam3"/>
</dbReference>
<dbReference type="InterPro" id="IPR017459">
    <property type="entry name" value="Glycosyl_Trfase_fam3_N_dom"/>
</dbReference>
<dbReference type="InterPro" id="IPR036320">
    <property type="entry name" value="Glycosyl_Trfase_fam3_N_dom_sf"/>
</dbReference>
<dbReference type="InterPro" id="IPR035902">
    <property type="entry name" value="Nuc_phospho_transferase"/>
</dbReference>
<dbReference type="NCBIfam" id="TIGR01245">
    <property type="entry name" value="trpD"/>
    <property type="match status" value="1"/>
</dbReference>
<dbReference type="PANTHER" id="PTHR43285">
    <property type="entry name" value="ANTHRANILATE PHOSPHORIBOSYLTRANSFERASE"/>
    <property type="match status" value="1"/>
</dbReference>
<dbReference type="PANTHER" id="PTHR43285:SF2">
    <property type="entry name" value="ANTHRANILATE PHOSPHORIBOSYLTRANSFERASE"/>
    <property type="match status" value="1"/>
</dbReference>
<dbReference type="Pfam" id="PF02885">
    <property type="entry name" value="Glycos_trans_3N"/>
    <property type="match status" value="1"/>
</dbReference>
<dbReference type="Pfam" id="PF00591">
    <property type="entry name" value="Glycos_transf_3"/>
    <property type="match status" value="1"/>
</dbReference>
<dbReference type="SUPFAM" id="SSF52418">
    <property type="entry name" value="Nucleoside phosphorylase/phosphoribosyltransferase catalytic domain"/>
    <property type="match status" value="1"/>
</dbReference>
<dbReference type="SUPFAM" id="SSF47648">
    <property type="entry name" value="Nucleoside phosphorylase/phosphoribosyltransferase N-terminal domain"/>
    <property type="match status" value="1"/>
</dbReference>
<evidence type="ECO:0000255" key="1">
    <source>
        <dbReference type="HAMAP-Rule" id="MF_00211"/>
    </source>
</evidence>
<keyword id="KW-0028">Amino-acid biosynthesis</keyword>
<keyword id="KW-0057">Aromatic amino acid biosynthesis</keyword>
<keyword id="KW-0328">Glycosyltransferase</keyword>
<keyword id="KW-0460">Magnesium</keyword>
<keyword id="KW-0479">Metal-binding</keyword>
<keyword id="KW-1185">Reference proteome</keyword>
<keyword id="KW-0808">Transferase</keyword>
<keyword id="KW-0822">Tryptophan biosynthesis</keyword>
<reference key="1">
    <citation type="journal article" date="2000" name="Nature">
        <title>Genome sequence of the endocellular bacterial symbiont of aphids Buchnera sp. APS.</title>
        <authorList>
            <person name="Shigenobu S."/>
            <person name="Watanabe H."/>
            <person name="Hattori M."/>
            <person name="Sakaki Y."/>
            <person name="Ishikawa H."/>
        </authorList>
    </citation>
    <scope>NUCLEOTIDE SEQUENCE [LARGE SCALE GENOMIC DNA]</scope>
    <source>
        <strain>APS</strain>
    </source>
</reference>